<proteinExistence type="inferred from homology"/>
<accession>P0A172</accession>
<accession>P15591</accession>
<sequence length="497" mass="56215">MKPSLVLKMGQQLTMTPQLQQAIRLLQLSTLDLQQEIQEALESNPMLERQEDGEDFDNSDPMADNAENKPAAEVQDNSFQESTVSADNLEDGEWSERIPNELPVDTAWEDIYQTSASSLPSNDDDEWDFTTRTSAGESLQSHLLWQLNLAPMSDTDRLIAVTLIDSINGQGYLEDTLEEICAGFDPELDIELDEVEAVLHRIQQFEPAGVGARNLGECLLLQLRQLPATTPWMTEAKRLVTDFIDLLGSRDYSQLMRRMKIKEDELRQVIELVQSLNPRPGSQIESSEPEYVVPDVIVRKDSDRWLVELNQEAIPRLRVNPQYAGFVRRADTSADNTFMRNQLQEARWFIKSLQSRNETLMKVATQIVEHQRGFLDHGDEAMKPLVLHDIAEAVGMHESTISRVTTQKYMHTPRGIYELKYFFSSHVSTSEGGECSSTAIRAIIKKLVAAENQKKPLSDSKIAGLLEAQGIQVARRTVAKYRESLGIAPSSERKRLM</sequence>
<feature type="chain" id="PRO_0000205536" description="RNA polymerase sigma-54 factor">
    <location>
        <begin position="1"/>
        <end position="497"/>
    </location>
</feature>
<feature type="DNA-binding region" description="H-T-H motif" evidence="1">
    <location>
        <begin position="386"/>
        <end position="405"/>
    </location>
</feature>
<feature type="region of interest" description="Disordered" evidence="2">
    <location>
        <begin position="41"/>
        <end position="101"/>
    </location>
</feature>
<feature type="short sequence motif" description="RPON box">
    <location>
        <begin position="474"/>
        <end position="482"/>
    </location>
</feature>
<feature type="compositionally biased region" description="Polar residues" evidence="2">
    <location>
        <begin position="75"/>
        <end position="86"/>
    </location>
</feature>
<keyword id="KW-0238">DNA-binding</keyword>
<keyword id="KW-0240">DNA-directed RNA polymerase</keyword>
<keyword id="KW-0548">Nucleotidyltransferase</keyword>
<keyword id="KW-0731">Sigma factor</keyword>
<keyword id="KW-0804">Transcription</keyword>
<keyword id="KW-0805">Transcription regulation</keyword>
<keyword id="KW-0808">Transferase</keyword>
<name>RP54_PSEPU</name>
<comment type="function">
    <text>Sigma factors are initiation factors that promote the attachment of RNA polymerase to specific initiation sites and are then released. This sigma factor is responsible for the expression of the xylCAB operon and the xylS gene. The open complex (sigma-54 and core RNA polymerase) serves as the receptor for receipt of the melting signal from the remotely bound activator protein XylR for the expression of the xylCAB operon and xylS.</text>
</comment>
<comment type="similarity">
    <text evidence="3">Belongs to the sigma-54 factor family.</text>
</comment>
<gene>
    <name type="primary">rpoN</name>
    <name type="synonym">ntrA</name>
</gene>
<protein>
    <recommendedName>
        <fullName>RNA polymerase sigma-54 factor</fullName>
    </recommendedName>
</protein>
<dbReference type="EMBL" id="M24916">
    <property type="protein sequence ID" value="AAA88444.1"/>
    <property type="molecule type" value="Genomic_DNA"/>
</dbReference>
<dbReference type="PIR" id="JQ0338">
    <property type="entry name" value="JQ0338"/>
</dbReference>
<dbReference type="PIR" id="S15918">
    <property type="entry name" value="RNPSSN"/>
</dbReference>
<dbReference type="RefSeq" id="WP_003255133.1">
    <property type="nucleotide sequence ID" value="NZ_SCFX01000028.1"/>
</dbReference>
<dbReference type="SMR" id="P0A172"/>
<dbReference type="eggNOG" id="COG1508">
    <property type="taxonomic scope" value="Bacteria"/>
</dbReference>
<dbReference type="OMA" id="VTTQKFM"/>
<dbReference type="GO" id="GO:0000428">
    <property type="term" value="C:DNA-directed RNA polymerase complex"/>
    <property type="evidence" value="ECO:0007669"/>
    <property type="project" value="UniProtKB-KW"/>
</dbReference>
<dbReference type="GO" id="GO:0003677">
    <property type="term" value="F:DNA binding"/>
    <property type="evidence" value="ECO:0007669"/>
    <property type="project" value="UniProtKB-KW"/>
</dbReference>
<dbReference type="GO" id="GO:0001216">
    <property type="term" value="F:DNA-binding transcription activator activity"/>
    <property type="evidence" value="ECO:0007669"/>
    <property type="project" value="InterPro"/>
</dbReference>
<dbReference type="GO" id="GO:0016779">
    <property type="term" value="F:nucleotidyltransferase activity"/>
    <property type="evidence" value="ECO:0007669"/>
    <property type="project" value="UniProtKB-KW"/>
</dbReference>
<dbReference type="GO" id="GO:0016987">
    <property type="term" value="F:sigma factor activity"/>
    <property type="evidence" value="ECO:0007669"/>
    <property type="project" value="UniProtKB-KW"/>
</dbReference>
<dbReference type="GO" id="GO:0006352">
    <property type="term" value="P:DNA-templated transcription initiation"/>
    <property type="evidence" value="ECO:0007669"/>
    <property type="project" value="InterPro"/>
</dbReference>
<dbReference type="FunFam" id="1.10.10.1330:FF:000001">
    <property type="entry name" value="RNA polymerase sigma-54 factor"/>
    <property type="match status" value="1"/>
</dbReference>
<dbReference type="FunFam" id="1.10.10.60:FF:000045">
    <property type="entry name" value="RNA polymerase sigma-54 factor"/>
    <property type="match status" value="1"/>
</dbReference>
<dbReference type="Gene3D" id="1.10.10.60">
    <property type="entry name" value="Homeodomain-like"/>
    <property type="match status" value="1"/>
</dbReference>
<dbReference type="Gene3D" id="1.10.10.1330">
    <property type="entry name" value="RNA polymerase sigma-54 factor, core-binding domain"/>
    <property type="match status" value="1"/>
</dbReference>
<dbReference type="InterPro" id="IPR000394">
    <property type="entry name" value="RNA_pol_sigma_54"/>
</dbReference>
<dbReference type="InterPro" id="IPR007046">
    <property type="entry name" value="RNA_pol_sigma_54_core-bd"/>
</dbReference>
<dbReference type="InterPro" id="IPR007634">
    <property type="entry name" value="RNA_pol_sigma_54_DNA-bd"/>
</dbReference>
<dbReference type="InterPro" id="IPR038709">
    <property type="entry name" value="RpoN_core-bd_sf"/>
</dbReference>
<dbReference type="NCBIfam" id="NF004595">
    <property type="entry name" value="PRK05932.1-2"/>
    <property type="match status" value="1"/>
</dbReference>
<dbReference type="NCBIfam" id="NF009118">
    <property type="entry name" value="PRK12469.1"/>
    <property type="match status" value="1"/>
</dbReference>
<dbReference type="NCBIfam" id="TIGR02395">
    <property type="entry name" value="rpoN_sigma"/>
    <property type="match status" value="1"/>
</dbReference>
<dbReference type="PANTHER" id="PTHR32248">
    <property type="entry name" value="RNA POLYMERASE SIGMA-54 FACTOR"/>
    <property type="match status" value="1"/>
</dbReference>
<dbReference type="PANTHER" id="PTHR32248:SF4">
    <property type="entry name" value="RNA POLYMERASE SIGMA-54 FACTOR"/>
    <property type="match status" value="1"/>
</dbReference>
<dbReference type="Pfam" id="PF00309">
    <property type="entry name" value="Sigma54_AID"/>
    <property type="match status" value="1"/>
</dbReference>
<dbReference type="Pfam" id="PF04963">
    <property type="entry name" value="Sigma54_CBD"/>
    <property type="match status" value="1"/>
</dbReference>
<dbReference type="Pfam" id="PF04552">
    <property type="entry name" value="Sigma54_DBD"/>
    <property type="match status" value="1"/>
</dbReference>
<dbReference type="PIRSF" id="PIRSF000774">
    <property type="entry name" value="RpoN"/>
    <property type="match status" value="1"/>
</dbReference>
<dbReference type="PRINTS" id="PR00045">
    <property type="entry name" value="SIGMA54FCT"/>
</dbReference>
<dbReference type="PROSITE" id="PS00717">
    <property type="entry name" value="SIGMA54_1"/>
    <property type="match status" value="1"/>
</dbReference>
<dbReference type="PROSITE" id="PS00718">
    <property type="entry name" value="SIGMA54_2"/>
    <property type="match status" value="1"/>
</dbReference>
<dbReference type="PROSITE" id="PS50044">
    <property type="entry name" value="SIGMA54_3"/>
    <property type="match status" value="1"/>
</dbReference>
<reference key="1">
    <citation type="journal article" date="1989" name="Gene">
        <title>Cloning and sequence analysis of the ntrA (rpoN) gene of Pseudomonas putida.</title>
        <authorList>
            <person name="Inouye S."/>
            <person name="Yamada M."/>
            <person name="Nakazawa A."/>
            <person name="Nakazawa T."/>
        </authorList>
    </citation>
    <scope>NUCLEOTIDE SEQUENCE [GENOMIC DNA]</scope>
    <source>
        <strain>TN2100</strain>
    </source>
</reference>
<organism>
    <name type="scientific">Pseudomonas putida</name>
    <name type="common">Arthrobacter siderocapsulatus</name>
    <dbReference type="NCBI Taxonomy" id="303"/>
    <lineage>
        <taxon>Bacteria</taxon>
        <taxon>Pseudomonadati</taxon>
        <taxon>Pseudomonadota</taxon>
        <taxon>Gammaproteobacteria</taxon>
        <taxon>Pseudomonadales</taxon>
        <taxon>Pseudomonadaceae</taxon>
        <taxon>Pseudomonas</taxon>
    </lineage>
</organism>
<evidence type="ECO:0000255" key="1"/>
<evidence type="ECO:0000256" key="2">
    <source>
        <dbReference type="SAM" id="MobiDB-lite"/>
    </source>
</evidence>
<evidence type="ECO:0000305" key="3"/>